<comment type="function">
    <text evidence="1">Catalyzes the specific phosphorylation of the 3-hydroxyl group of shikimic acid using ATP as a cosubstrate.</text>
</comment>
<comment type="catalytic activity">
    <reaction evidence="1">
        <text>shikimate + ATP = 3-phosphoshikimate + ADP + H(+)</text>
        <dbReference type="Rhea" id="RHEA:13121"/>
        <dbReference type="ChEBI" id="CHEBI:15378"/>
        <dbReference type="ChEBI" id="CHEBI:30616"/>
        <dbReference type="ChEBI" id="CHEBI:36208"/>
        <dbReference type="ChEBI" id="CHEBI:145989"/>
        <dbReference type="ChEBI" id="CHEBI:456216"/>
        <dbReference type="EC" id="2.7.1.71"/>
    </reaction>
</comment>
<comment type="cofactor">
    <cofactor evidence="1">
        <name>Mg(2+)</name>
        <dbReference type="ChEBI" id="CHEBI:18420"/>
    </cofactor>
    <text evidence="1">Binds 1 Mg(2+) ion per subunit.</text>
</comment>
<comment type="pathway">
    <text evidence="1">Metabolic intermediate biosynthesis; chorismate biosynthesis; chorismate from D-erythrose 4-phosphate and phosphoenolpyruvate: step 5/7.</text>
</comment>
<comment type="subunit">
    <text evidence="1">Monomer.</text>
</comment>
<comment type="subcellular location">
    <subcellularLocation>
        <location evidence="1">Cytoplasm</location>
    </subcellularLocation>
</comment>
<comment type="similarity">
    <text evidence="1">Belongs to the shikimate kinase family.</text>
</comment>
<proteinExistence type="inferred from homology"/>
<name>AROK_BACP2</name>
<gene>
    <name evidence="1" type="primary">aroK</name>
    <name type="ordered locus">BPUM_0290</name>
</gene>
<reference key="1">
    <citation type="journal article" date="2007" name="PLoS ONE">
        <title>Paradoxical DNA repair and peroxide resistance gene conservation in Bacillus pumilus SAFR-032.</title>
        <authorList>
            <person name="Gioia J."/>
            <person name="Yerrapragada S."/>
            <person name="Qin X."/>
            <person name="Jiang H."/>
            <person name="Igboeli O.C."/>
            <person name="Muzny D."/>
            <person name="Dugan-Rocha S."/>
            <person name="Ding Y."/>
            <person name="Hawes A."/>
            <person name="Liu W."/>
            <person name="Perez L."/>
            <person name="Kovar C."/>
            <person name="Dinh H."/>
            <person name="Lee S."/>
            <person name="Nazareth L."/>
            <person name="Blyth P."/>
            <person name="Holder M."/>
            <person name="Buhay C."/>
            <person name="Tirumalai M.R."/>
            <person name="Liu Y."/>
            <person name="Dasgupta I."/>
            <person name="Bokhetache L."/>
            <person name="Fujita M."/>
            <person name="Karouia F."/>
            <person name="Eswara Moorthy P."/>
            <person name="Siefert J."/>
            <person name="Uzman A."/>
            <person name="Buzumbo P."/>
            <person name="Verma A."/>
            <person name="Zwiya H."/>
            <person name="McWilliams B.D."/>
            <person name="Olowu A."/>
            <person name="Clinkenbeard K.D."/>
            <person name="Newcombe D."/>
            <person name="Golebiewski L."/>
            <person name="Petrosino J.F."/>
            <person name="Nicholson W.L."/>
            <person name="Fox G.E."/>
            <person name="Venkateswaran K."/>
            <person name="Highlander S.K."/>
            <person name="Weinstock G.M."/>
        </authorList>
    </citation>
    <scope>NUCLEOTIDE SEQUENCE [LARGE SCALE GENOMIC DNA]</scope>
    <source>
        <strain>SAFR-032</strain>
    </source>
</reference>
<dbReference type="EC" id="2.7.1.71" evidence="1"/>
<dbReference type="EMBL" id="CP000813">
    <property type="protein sequence ID" value="ABV60988.1"/>
    <property type="molecule type" value="Genomic_DNA"/>
</dbReference>
<dbReference type="RefSeq" id="WP_003214270.1">
    <property type="nucleotide sequence ID" value="NZ_VEIS01000004.1"/>
</dbReference>
<dbReference type="SMR" id="A8F9S1"/>
<dbReference type="STRING" id="315750.BPUM_0290"/>
<dbReference type="KEGG" id="bpu:BPUM_0290"/>
<dbReference type="eggNOG" id="COG0703">
    <property type="taxonomic scope" value="Bacteria"/>
</dbReference>
<dbReference type="HOGENOM" id="CLU_057607_4_3_9"/>
<dbReference type="OrthoDB" id="9800332at2"/>
<dbReference type="UniPathway" id="UPA00053">
    <property type="reaction ID" value="UER00088"/>
</dbReference>
<dbReference type="Proteomes" id="UP000001355">
    <property type="component" value="Chromosome"/>
</dbReference>
<dbReference type="GO" id="GO:0005829">
    <property type="term" value="C:cytosol"/>
    <property type="evidence" value="ECO:0007669"/>
    <property type="project" value="TreeGrafter"/>
</dbReference>
<dbReference type="GO" id="GO:0005524">
    <property type="term" value="F:ATP binding"/>
    <property type="evidence" value="ECO:0007669"/>
    <property type="project" value="UniProtKB-UniRule"/>
</dbReference>
<dbReference type="GO" id="GO:0000287">
    <property type="term" value="F:magnesium ion binding"/>
    <property type="evidence" value="ECO:0007669"/>
    <property type="project" value="UniProtKB-UniRule"/>
</dbReference>
<dbReference type="GO" id="GO:0004765">
    <property type="term" value="F:shikimate kinase activity"/>
    <property type="evidence" value="ECO:0007669"/>
    <property type="project" value="UniProtKB-UniRule"/>
</dbReference>
<dbReference type="GO" id="GO:0008652">
    <property type="term" value="P:amino acid biosynthetic process"/>
    <property type="evidence" value="ECO:0007669"/>
    <property type="project" value="UniProtKB-KW"/>
</dbReference>
<dbReference type="GO" id="GO:0009073">
    <property type="term" value="P:aromatic amino acid family biosynthetic process"/>
    <property type="evidence" value="ECO:0007669"/>
    <property type="project" value="UniProtKB-KW"/>
</dbReference>
<dbReference type="GO" id="GO:0009423">
    <property type="term" value="P:chorismate biosynthetic process"/>
    <property type="evidence" value="ECO:0007669"/>
    <property type="project" value="UniProtKB-UniRule"/>
</dbReference>
<dbReference type="CDD" id="cd00464">
    <property type="entry name" value="SK"/>
    <property type="match status" value="1"/>
</dbReference>
<dbReference type="Gene3D" id="3.40.50.300">
    <property type="entry name" value="P-loop containing nucleotide triphosphate hydrolases"/>
    <property type="match status" value="1"/>
</dbReference>
<dbReference type="HAMAP" id="MF_00109">
    <property type="entry name" value="Shikimate_kinase"/>
    <property type="match status" value="1"/>
</dbReference>
<dbReference type="InterPro" id="IPR027417">
    <property type="entry name" value="P-loop_NTPase"/>
</dbReference>
<dbReference type="InterPro" id="IPR031322">
    <property type="entry name" value="Shikimate/glucono_kinase"/>
</dbReference>
<dbReference type="InterPro" id="IPR000623">
    <property type="entry name" value="Shikimate_kinase/TSH1"/>
</dbReference>
<dbReference type="InterPro" id="IPR023000">
    <property type="entry name" value="Shikimate_kinase_CS"/>
</dbReference>
<dbReference type="PANTHER" id="PTHR21087">
    <property type="entry name" value="SHIKIMATE KINASE"/>
    <property type="match status" value="1"/>
</dbReference>
<dbReference type="PANTHER" id="PTHR21087:SF16">
    <property type="entry name" value="SHIKIMATE KINASE 1, CHLOROPLASTIC"/>
    <property type="match status" value="1"/>
</dbReference>
<dbReference type="Pfam" id="PF01202">
    <property type="entry name" value="SKI"/>
    <property type="match status" value="1"/>
</dbReference>
<dbReference type="PRINTS" id="PR01100">
    <property type="entry name" value="SHIKIMTKNASE"/>
</dbReference>
<dbReference type="SUPFAM" id="SSF52540">
    <property type="entry name" value="P-loop containing nucleoside triphosphate hydrolases"/>
    <property type="match status" value="1"/>
</dbReference>
<dbReference type="PROSITE" id="PS01128">
    <property type="entry name" value="SHIKIMATE_KINASE"/>
    <property type="match status" value="1"/>
</dbReference>
<keyword id="KW-0028">Amino-acid biosynthesis</keyword>
<keyword id="KW-0057">Aromatic amino acid biosynthesis</keyword>
<keyword id="KW-0067">ATP-binding</keyword>
<keyword id="KW-0963">Cytoplasm</keyword>
<keyword id="KW-0418">Kinase</keyword>
<keyword id="KW-0460">Magnesium</keyword>
<keyword id="KW-0479">Metal-binding</keyword>
<keyword id="KW-0547">Nucleotide-binding</keyword>
<keyword id="KW-0808">Transferase</keyword>
<organism>
    <name type="scientific">Bacillus pumilus (strain SAFR-032)</name>
    <dbReference type="NCBI Taxonomy" id="315750"/>
    <lineage>
        <taxon>Bacteria</taxon>
        <taxon>Bacillati</taxon>
        <taxon>Bacillota</taxon>
        <taxon>Bacilli</taxon>
        <taxon>Bacillales</taxon>
        <taxon>Bacillaceae</taxon>
        <taxon>Bacillus</taxon>
    </lineage>
</organism>
<protein>
    <recommendedName>
        <fullName evidence="1">Shikimate kinase</fullName>
        <shortName evidence="1">SK</shortName>
        <ecNumber evidence="1">2.7.1.71</ecNumber>
    </recommendedName>
</protein>
<accession>A8F9S1</accession>
<evidence type="ECO:0000255" key="1">
    <source>
        <dbReference type="HAMAP-Rule" id="MF_00109"/>
    </source>
</evidence>
<feature type="chain" id="PRO_1000094373" description="Shikimate kinase">
    <location>
        <begin position="1"/>
        <end position="185"/>
    </location>
</feature>
<feature type="binding site" evidence="1">
    <location>
        <begin position="21"/>
        <end position="26"/>
    </location>
    <ligand>
        <name>ATP</name>
        <dbReference type="ChEBI" id="CHEBI:30616"/>
    </ligand>
</feature>
<feature type="binding site" evidence="1">
    <location>
        <position position="25"/>
    </location>
    <ligand>
        <name>Mg(2+)</name>
        <dbReference type="ChEBI" id="CHEBI:18420"/>
    </ligand>
</feature>
<feature type="binding site" evidence="1">
    <location>
        <position position="43"/>
    </location>
    <ligand>
        <name>substrate</name>
    </ligand>
</feature>
<feature type="binding site" evidence="1">
    <location>
        <position position="67"/>
    </location>
    <ligand>
        <name>substrate</name>
    </ligand>
</feature>
<feature type="binding site" evidence="1">
    <location>
        <position position="90"/>
    </location>
    <ligand>
        <name>substrate</name>
    </ligand>
</feature>
<feature type="binding site" evidence="1">
    <location>
        <position position="129"/>
    </location>
    <ligand>
        <name>ATP</name>
        <dbReference type="ChEBI" id="CHEBI:30616"/>
    </ligand>
</feature>
<feature type="binding site" evidence="1">
    <location>
        <position position="147"/>
    </location>
    <ligand>
        <name>substrate</name>
    </ligand>
</feature>
<sequence length="185" mass="21920">MKINREIPVRQRNIVLIGFMGVGKTTIGQLVAKKLYRDFIDVDQEIEKKYNMTIPEMFQQKGEAFFRQAEKDYIVDLCEHTQLKIVSLGGGAFKQEEIKRACLKHCTVLFLDLSWENWKQRLDILIENRPVLHNRTLDEMKELFEERREIYSLHNSRVETDHLEAEEVANYIVDTLKLGWDLYSK</sequence>